<comment type="catalytic activity">
    <reaction evidence="1">
        <text>D-erythro-1-(imidazol-4-yl)glycerol 3-phosphate = 3-(imidazol-4-yl)-2-oxopropyl phosphate + H2O</text>
        <dbReference type="Rhea" id="RHEA:11040"/>
        <dbReference type="ChEBI" id="CHEBI:15377"/>
        <dbReference type="ChEBI" id="CHEBI:57766"/>
        <dbReference type="ChEBI" id="CHEBI:58278"/>
        <dbReference type="EC" id="4.2.1.19"/>
    </reaction>
</comment>
<comment type="pathway">
    <text evidence="1">Amino-acid biosynthesis; L-histidine biosynthesis; L-histidine from 5-phospho-alpha-D-ribose 1-diphosphate: step 6/9.</text>
</comment>
<comment type="subcellular location">
    <subcellularLocation>
        <location evidence="1">Cytoplasm</location>
    </subcellularLocation>
</comment>
<comment type="similarity">
    <text evidence="1">Belongs to the imidazoleglycerol-phosphate dehydratase family.</text>
</comment>
<name>HIS7_RHOE4</name>
<feature type="chain" id="PRO_1000202517" description="Imidazoleglycerol-phosphate dehydratase">
    <location>
        <begin position="1"/>
        <end position="204"/>
    </location>
</feature>
<accession>C1A0M3</accession>
<keyword id="KW-0028">Amino-acid biosynthesis</keyword>
<keyword id="KW-0963">Cytoplasm</keyword>
<keyword id="KW-0368">Histidine biosynthesis</keyword>
<keyword id="KW-0456">Lyase</keyword>
<protein>
    <recommendedName>
        <fullName evidence="1">Imidazoleglycerol-phosphate dehydratase</fullName>
        <shortName evidence="1">IGPD</shortName>
        <ecNumber evidence="1">4.2.1.19</ecNumber>
    </recommendedName>
</protein>
<gene>
    <name evidence="1" type="primary">hisB</name>
    <name type="ordered locus">RER_34500</name>
</gene>
<evidence type="ECO:0000255" key="1">
    <source>
        <dbReference type="HAMAP-Rule" id="MF_00076"/>
    </source>
</evidence>
<organism>
    <name type="scientific">Rhodococcus erythropolis (strain PR4 / NBRC 100887)</name>
    <dbReference type="NCBI Taxonomy" id="234621"/>
    <lineage>
        <taxon>Bacteria</taxon>
        <taxon>Bacillati</taxon>
        <taxon>Actinomycetota</taxon>
        <taxon>Actinomycetes</taxon>
        <taxon>Mycobacteriales</taxon>
        <taxon>Nocardiaceae</taxon>
        <taxon>Rhodococcus</taxon>
        <taxon>Rhodococcus erythropolis group</taxon>
    </lineage>
</organism>
<sequence length="204" mass="22204">MSDRIARIERTTRESSIVVELNLDGTGIVDVSTGVPFFDHMLNALGTHASFDLDVKAKGDVEIDAHHTVEDTAIVFGQALGQALGDKKGIRRFGDAFIPMDETLAHASVDVSGRPYCVHTGEPDYMVHSVIGGYPGVPYHAVINRHVFESIALNARIALHVRVLYGRDQHHITEAEYKAVARALREAVEPDPRVSGVPSTKGTL</sequence>
<reference key="1">
    <citation type="submission" date="2005-03" db="EMBL/GenBank/DDBJ databases">
        <title>Comparison of the complete genome sequences of Rhodococcus erythropolis PR4 and Rhodococcus opacus B4.</title>
        <authorList>
            <person name="Takarada H."/>
            <person name="Sekine M."/>
            <person name="Hosoyama A."/>
            <person name="Yamada R."/>
            <person name="Fujisawa T."/>
            <person name="Omata S."/>
            <person name="Shimizu A."/>
            <person name="Tsukatani N."/>
            <person name="Tanikawa S."/>
            <person name="Fujita N."/>
            <person name="Harayama S."/>
        </authorList>
    </citation>
    <scope>NUCLEOTIDE SEQUENCE [LARGE SCALE GENOMIC DNA]</scope>
    <source>
        <strain>PR4 / NBRC 100887</strain>
    </source>
</reference>
<proteinExistence type="inferred from homology"/>
<dbReference type="EC" id="4.2.1.19" evidence="1"/>
<dbReference type="EMBL" id="AP008957">
    <property type="protein sequence ID" value="BAH34158.1"/>
    <property type="molecule type" value="Genomic_DNA"/>
</dbReference>
<dbReference type="RefSeq" id="WP_003942383.1">
    <property type="nucleotide sequence ID" value="NC_012490.1"/>
</dbReference>
<dbReference type="SMR" id="C1A0M3"/>
<dbReference type="GeneID" id="64141238"/>
<dbReference type="KEGG" id="rer:RER_34500"/>
<dbReference type="eggNOG" id="COG0131">
    <property type="taxonomic scope" value="Bacteria"/>
</dbReference>
<dbReference type="HOGENOM" id="CLU_044308_3_0_11"/>
<dbReference type="UniPathway" id="UPA00031">
    <property type="reaction ID" value="UER00011"/>
</dbReference>
<dbReference type="Proteomes" id="UP000002204">
    <property type="component" value="Chromosome"/>
</dbReference>
<dbReference type="GO" id="GO:0005737">
    <property type="term" value="C:cytoplasm"/>
    <property type="evidence" value="ECO:0007669"/>
    <property type="project" value="UniProtKB-SubCell"/>
</dbReference>
<dbReference type="GO" id="GO:0004424">
    <property type="term" value="F:imidazoleglycerol-phosphate dehydratase activity"/>
    <property type="evidence" value="ECO:0007669"/>
    <property type="project" value="UniProtKB-UniRule"/>
</dbReference>
<dbReference type="GO" id="GO:0000105">
    <property type="term" value="P:L-histidine biosynthetic process"/>
    <property type="evidence" value="ECO:0007669"/>
    <property type="project" value="UniProtKB-UniRule"/>
</dbReference>
<dbReference type="CDD" id="cd07914">
    <property type="entry name" value="IGPD"/>
    <property type="match status" value="1"/>
</dbReference>
<dbReference type="FunFam" id="3.30.230.40:FF:000001">
    <property type="entry name" value="Imidazoleglycerol-phosphate dehydratase HisB"/>
    <property type="match status" value="1"/>
</dbReference>
<dbReference type="FunFam" id="3.30.230.40:FF:000003">
    <property type="entry name" value="Imidazoleglycerol-phosphate dehydratase HisB"/>
    <property type="match status" value="1"/>
</dbReference>
<dbReference type="Gene3D" id="3.30.230.40">
    <property type="entry name" value="Imidazole glycerol phosphate dehydratase, domain 1"/>
    <property type="match status" value="2"/>
</dbReference>
<dbReference type="HAMAP" id="MF_00076">
    <property type="entry name" value="HisB"/>
    <property type="match status" value="1"/>
</dbReference>
<dbReference type="InterPro" id="IPR038494">
    <property type="entry name" value="IGPD_sf"/>
</dbReference>
<dbReference type="InterPro" id="IPR000807">
    <property type="entry name" value="ImidazoleglycerolP_deHydtase"/>
</dbReference>
<dbReference type="InterPro" id="IPR020565">
    <property type="entry name" value="ImidazoleglycerP_deHydtase_CS"/>
</dbReference>
<dbReference type="InterPro" id="IPR020568">
    <property type="entry name" value="Ribosomal_Su5_D2-typ_SF"/>
</dbReference>
<dbReference type="NCBIfam" id="NF002110">
    <property type="entry name" value="PRK00951.1-6"/>
    <property type="match status" value="1"/>
</dbReference>
<dbReference type="NCBIfam" id="NF002111">
    <property type="entry name" value="PRK00951.2-1"/>
    <property type="match status" value="1"/>
</dbReference>
<dbReference type="NCBIfam" id="NF002114">
    <property type="entry name" value="PRK00951.2-4"/>
    <property type="match status" value="1"/>
</dbReference>
<dbReference type="PANTHER" id="PTHR23133:SF2">
    <property type="entry name" value="IMIDAZOLEGLYCEROL-PHOSPHATE DEHYDRATASE"/>
    <property type="match status" value="1"/>
</dbReference>
<dbReference type="PANTHER" id="PTHR23133">
    <property type="entry name" value="IMIDAZOLEGLYCEROL-PHOSPHATE DEHYDRATASE HIS7"/>
    <property type="match status" value="1"/>
</dbReference>
<dbReference type="Pfam" id="PF00475">
    <property type="entry name" value="IGPD"/>
    <property type="match status" value="1"/>
</dbReference>
<dbReference type="SUPFAM" id="SSF54211">
    <property type="entry name" value="Ribosomal protein S5 domain 2-like"/>
    <property type="match status" value="2"/>
</dbReference>
<dbReference type="PROSITE" id="PS00954">
    <property type="entry name" value="IGP_DEHYDRATASE_1"/>
    <property type="match status" value="1"/>
</dbReference>
<dbReference type="PROSITE" id="PS00955">
    <property type="entry name" value="IGP_DEHYDRATASE_2"/>
    <property type="match status" value="1"/>
</dbReference>